<reference key="1">
    <citation type="journal article" date="2006" name="BMC Genomics">
        <title>The complete chloroplast genome sequence of Gossypium hirsutum: organization and phylogenetic relationships to other angiosperms.</title>
        <authorList>
            <person name="Lee S.-B."/>
            <person name="Kaittanis C."/>
            <person name="Jansen R.K."/>
            <person name="Hostetler J.B."/>
            <person name="Tallon L.J."/>
            <person name="Town C.D."/>
            <person name="Daniell H."/>
        </authorList>
    </citation>
    <scope>NUCLEOTIDE SEQUENCE [LARGE SCALE GENOMIC DNA]</scope>
    <source>
        <strain>cv. Coker 310FR</strain>
    </source>
</reference>
<accession>Q2L8Y9</accession>
<protein>
    <recommendedName>
        <fullName evidence="1">Photosystem II reaction center protein I</fullName>
        <shortName evidence="1">PSII-I</shortName>
    </recommendedName>
    <alternativeName>
        <fullName evidence="1">PSII 4.8 kDa protein</fullName>
    </alternativeName>
</protein>
<proteinExistence type="inferred from homology"/>
<evidence type="ECO:0000255" key="1">
    <source>
        <dbReference type="HAMAP-Rule" id="MF_01316"/>
    </source>
</evidence>
<sequence length="36" mass="4168">MLTLKLFVYTVVIFFVSLFIFGFLSNDPGRNPGREE</sequence>
<geneLocation type="chloroplast"/>
<gene>
    <name evidence="1" type="primary">psbI</name>
</gene>
<name>PSBI_GOSHI</name>
<keyword id="KW-0150">Chloroplast</keyword>
<keyword id="KW-0472">Membrane</keyword>
<keyword id="KW-0602">Photosynthesis</keyword>
<keyword id="KW-0604">Photosystem II</keyword>
<keyword id="KW-0934">Plastid</keyword>
<keyword id="KW-0674">Reaction center</keyword>
<keyword id="KW-1185">Reference proteome</keyword>
<keyword id="KW-0793">Thylakoid</keyword>
<keyword id="KW-0812">Transmembrane</keyword>
<keyword id="KW-1133">Transmembrane helix</keyword>
<feature type="chain" id="PRO_0000275794" description="Photosystem II reaction center protein I">
    <location>
        <begin position="1"/>
        <end position="36"/>
    </location>
</feature>
<feature type="transmembrane region" description="Helical" evidence="1">
    <location>
        <begin position="4"/>
        <end position="24"/>
    </location>
</feature>
<comment type="function">
    <text evidence="1">One of the components of the core complex of photosystem II (PSII), required for its stability and/or assembly. PSII is a light-driven water:plastoquinone oxidoreductase that uses light energy to abstract electrons from H(2)O, generating O(2) and a proton gradient subsequently used for ATP formation. It consists of a core antenna complex that captures photons, and an electron transfer chain that converts photonic excitation into a charge separation.</text>
</comment>
<comment type="subunit">
    <text evidence="1">PSII is composed of 1 copy each of membrane proteins PsbA, PsbB, PsbC, PsbD, PsbE, PsbF, PsbH, PsbI, PsbJ, PsbK, PsbL, PsbM, PsbT, PsbX, PsbY, PsbZ, Psb30/Ycf12, at least 3 peripheral proteins of the oxygen-evolving complex and a large number of cofactors. It forms dimeric complexes.</text>
</comment>
<comment type="subcellular location">
    <subcellularLocation>
        <location evidence="1">Plastid</location>
        <location evidence="1">Chloroplast thylakoid membrane</location>
        <topology evidence="1">Single-pass membrane protein</topology>
    </subcellularLocation>
</comment>
<comment type="similarity">
    <text evidence="1">Belongs to the PsbI family.</text>
</comment>
<organism>
    <name type="scientific">Gossypium hirsutum</name>
    <name type="common">Upland cotton</name>
    <name type="synonym">Gossypium mexicanum</name>
    <dbReference type="NCBI Taxonomy" id="3635"/>
    <lineage>
        <taxon>Eukaryota</taxon>
        <taxon>Viridiplantae</taxon>
        <taxon>Streptophyta</taxon>
        <taxon>Embryophyta</taxon>
        <taxon>Tracheophyta</taxon>
        <taxon>Spermatophyta</taxon>
        <taxon>Magnoliopsida</taxon>
        <taxon>eudicotyledons</taxon>
        <taxon>Gunneridae</taxon>
        <taxon>Pentapetalae</taxon>
        <taxon>rosids</taxon>
        <taxon>malvids</taxon>
        <taxon>Malvales</taxon>
        <taxon>Malvaceae</taxon>
        <taxon>Malvoideae</taxon>
        <taxon>Gossypium</taxon>
    </lineage>
</organism>
<dbReference type="EMBL" id="DQ345959">
    <property type="protein sequence ID" value="ABC73612.1"/>
    <property type="molecule type" value="Genomic_DNA"/>
</dbReference>
<dbReference type="RefSeq" id="YP_538919.1">
    <property type="nucleotide sequence ID" value="NC_007944.1"/>
</dbReference>
<dbReference type="SMR" id="Q2L8Y9"/>
<dbReference type="GeneID" id="3989186"/>
<dbReference type="KEGG" id="ghi:3989186"/>
<dbReference type="OrthoDB" id="28686at41938"/>
<dbReference type="Proteomes" id="UP000189702">
    <property type="component" value="Chloroplast Pltd"/>
</dbReference>
<dbReference type="GO" id="GO:0009535">
    <property type="term" value="C:chloroplast thylakoid membrane"/>
    <property type="evidence" value="ECO:0007669"/>
    <property type="project" value="UniProtKB-SubCell"/>
</dbReference>
<dbReference type="GO" id="GO:0009539">
    <property type="term" value="C:photosystem II reaction center"/>
    <property type="evidence" value="ECO:0007669"/>
    <property type="project" value="InterPro"/>
</dbReference>
<dbReference type="GO" id="GO:0015979">
    <property type="term" value="P:photosynthesis"/>
    <property type="evidence" value="ECO:0007669"/>
    <property type="project" value="UniProtKB-UniRule"/>
</dbReference>
<dbReference type="HAMAP" id="MF_01316">
    <property type="entry name" value="PSII_PsbI"/>
    <property type="match status" value="1"/>
</dbReference>
<dbReference type="InterPro" id="IPR003686">
    <property type="entry name" value="PSII_PsbI"/>
</dbReference>
<dbReference type="InterPro" id="IPR037271">
    <property type="entry name" value="PSII_PsbI_sf"/>
</dbReference>
<dbReference type="NCBIfam" id="NF002735">
    <property type="entry name" value="PRK02655.1"/>
    <property type="match status" value="1"/>
</dbReference>
<dbReference type="PANTHER" id="PTHR35772">
    <property type="entry name" value="PHOTOSYSTEM II REACTION CENTER PROTEIN I"/>
    <property type="match status" value="1"/>
</dbReference>
<dbReference type="PANTHER" id="PTHR35772:SF1">
    <property type="entry name" value="PHOTOSYSTEM II REACTION CENTER PROTEIN I"/>
    <property type="match status" value="1"/>
</dbReference>
<dbReference type="Pfam" id="PF02532">
    <property type="entry name" value="PsbI"/>
    <property type="match status" value="1"/>
</dbReference>
<dbReference type="SUPFAM" id="SSF161041">
    <property type="entry name" value="Photosystem II reaction center protein I, PsbI"/>
    <property type="match status" value="1"/>
</dbReference>